<keyword id="KW-0406">Ion transport</keyword>
<keyword id="KW-0520">NAD</keyword>
<keyword id="KW-0915">Sodium</keyword>
<keyword id="KW-0739">Sodium transport</keyword>
<keyword id="KW-1278">Translocase</keyword>
<keyword id="KW-0813">Transport</keyword>
<keyword id="KW-0830">Ubiquinone</keyword>
<dbReference type="EC" id="7.2.1.1" evidence="1"/>
<dbReference type="EMBL" id="CP000964">
    <property type="protein sequence ID" value="ACI07451.1"/>
    <property type="molecule type" value="Genomic_DNA"/>
</dbReference>
<dbReference type="SMR" id="B5Y1F1"/>
<dbReference type="KEGG" id="kpe:KPK_4493"/>
<dbReference type="HOGENOM" id="CLU_046656_0_0_6"/>
<dbReference type="Proteomes" id="UP000001734">
    <property type="component" value="Chromosome"/>
</dbReference>
<dbReference type="GO" id="GO:0016655">
    <property type="term" value="F:oxidoreductase activity, acting on NAD(P)H, quinone or similar compound as acceptor"/>
    <property type="evidence" value="ECO:0007669"/>
    <property type="project" value="UniProtKB-UniRule"/>
</dbReference>
<dbReference type="GO" id="GO:0006814">
    <property type="term" value="P:sodium ion transport"/>
    <property type="evidence" value="ECO:0007669"/>
    <property type="project" value="UniProtKB-UniRule"/>
</dbReference>
<dbReference type="Gene3D" id="2.40.50.100">
    <property type="match status" value="1"/>
</dbReference>
<dbReference type="HAMAP" id="MF_00425">
    <property type="entry name" value="NqrA"/>
    <property type="match status" value="1"/>
</dbReference>
<dbReference type="InterPro" id="IPR008703">
    <property type="entry name" value="NqrA"/>
</dbReference>
<dbReference type="InterPro" id="IPR056148">
    <property type="entry name" value="NQRA_2nd"/>
</dbReference>
<dbReference type="InterPro" id="IPR022615">
    <property type="entry name" value="NqrA_C_domain"/>
</dbReference>
<dbReference type="InterPro" id="IPR056147">
    <property type="entry name" value="NQRA_N"/>
</dbReference>
<dbReference type="NCBIfam" id="TIGR01936">
    <property type="entry name" value="nqrA"/>
    <property type="match status" value="1"/>
</dbReference>
<dbReference type="NCBIfam" id="NF003759">
    <property type="entry name" value="PRK05352.1-2"/>
    <property type="match status" value="1"/>
</dbReference>
<dbReference type="PANTHER" id="PTHR37839">
    <property type="entry name" value="NA(+)-TRANSLOCATING NADH-QUINONE REDUCTASE SUBUNIT A"/>
    <property type="match status" value="1"/>
</dbReference>
<dbReference type="PANTHER" id="PTHR37839:SF1">
    <property type="entry name" value="NA(+)-TRANSLOCATING NADH-QUINONE REDUCTASE SUBUNIT A"/>
    <property type="match status" value="1"/>
</dbReference>
<dbReference type="Pfam" id="PF24836">
    <property type="entry name" value="NQRA_2nd"/>
    <property type="match status" value="1"/>
</dbReference>
<dbReference type="Pfam" id="PF05896">
    <property type="entry name" value="NQRA_N"/>
    <property type="match status" value="1"/>
</dbReference>
<dbReference type="Pfam" id="PF11973">
    <property type="entry name" value="NQRA_SLBB"/>
    <property type="match status" value="1"/>
</dbReference>
<proteinExistence type="inferred from homology"/>
<sequence length="447" mass="48453">MIKITKGLDLPIAGMPLQQISPAPAVKRVALLGEEYVGMRPAMAVKEGDRVKKGQILFEDKKTPGVYFTAPASGVVSAIHRGERRVLQSVVIDIEGNEAVAFTRYAADALAELPRDTVQQQLLASGLWTALRTRPFSKTPRPGSVPAAIFVNAMDTNPLAAEPQPIILAERAAFDAGLTVLTRLTDGKVHVCQPSGGKLGGHPAGQVCFNQFSGPHPAGLPGTHIHFLEPVSLNKQVWHLNYQDAIAIGQLFLEGELNCERVIALGGPQVKSPRLVKTTLGASLDDLLAGELEEGENRVISGSVLSGTRAHGPHAFLGRFHLQVSVVREGREKELFGWVMPGKEKFSITRTTLGHFFKRKRFHFSTDTHGGERAMVPIGNYERVMPLDILPTILLRDLLAGDSDSAQALGCLELDEEDLALCTYVCPGKYEYGPALRSVLTQIEQEG</sequence>
<reference key="1">
    <citation type="journal article" date="2008" name="PLoS Genet.">
        <title>Complete genome sequence of the N2-fixing broad host range endophyte Klebsiella pneumoniae 342 and virulence predictions verified in mice.</title>
        <authorList>
            <person name="Fouts D.E."/>
            <person name="Tyler H.L."/>
            <person name="DeBoy R.T."/>
            <person name="Daugherty S."/>
            <person name="Ren Q."/>
            <person name="Badger J.H."/>
            <person name="Durkin A.S."/>
            <person name="Huot H."/>
            <person name="Shrivastava S."/>
            <person name="Kothari S."/>
            <person name="Dodson R.J."/>
            <person name="Mohamoud Y."/>
            <person name="Khouri H."/>
            <person name="Roesch L.F.W."/>
            <person name="Krogfelt K.A."/>
            <person name="Struve C."/>
            <person name="Triplett E.W."/>
            <person name="Methe B.A."/>
        </authorList>
    </citation>
    <scope>NUCLEOTIDE SEQUENCE [LARGE SCALE GENOMIC DNA]</scope>
    <source>
        <strain>342</strain>
    </source>
</reference>
<feature type="chain" id="PRO_1000124172" description="Na(+)-translocating NADH-quinone reductase subunit A">
    <location>
        <begin position="1"/>
        <end position="447"/>
    </location>
</feature>
<protein>
    <recommendedName>
        <fullName evidence="1">Na(+)-translocating NADH-quinone reductase subunit A</fullName>
        <shortName evidence="1">Na(+)-NQR subunit A</shortName>
        <shortName evidence="1">Na(+)-translocating NQR subunit A</shortName>
        <ecNumber evidence="1">7.2.1.1</ecNumber>
    </recommendedName>
    <alternativeName>
        <fullName evidence="1">NQR complex subunit A</fullName>
    </alternativeName>
    <alternativeName>
        <fullName evidence="1">NQR-1 subunit A</fullName>
    </alternativeName>
</protein>
<evidence type="ECO:0000255" key="1">
    <source>
        <dbReference type="HAMAP-Rule" id="MF_00425"/>
    </source>
</evidence>
<gene>
    <name evidence="1" type="primary">nqrA</name>
    <name type="ordered locus">KPK_4493</name>
</gene>
<organism>
    <name type="scientific">Klebsiella pneumoniae (strain 342)</name>
    <dbReference type="NCBI Taxonomy" id="507522"/>
    <lineage>
        <taxon>Bacteria</taxon>
        <taxon>Pseudomonadati</taxon>
        <taxon>Pseudomonadota</taxon>
        <taxon>Gammaproteobacteria</taxon>
        <taxon>Enterobacterales</taxon>
        <taxon>Enterobacteriaceae</taxon>
        <taxon>Klebsiella/Raoultella group</taxon>
        <taxon>Klebsiella</taxon>
        <taxon>Klebsiella pneumoniae complex</taxon>
    </lineage>
</organism>
<accession>B5Y1F1</accession>
<name>NQRA_KLEP3</name>
<comment type="function">
    <text evidence="1">NQR complex catalyzes the reduction of ubiquinone-1 to ubiquinol by two successive reactions, coupled with the transport of Na(+) ions from the cytoplasm to the periplasm. NqrA to NqrE are probably involved in the second step, the conversion of ubisemiquinone to ubiquinol.</text>
</comment>
<comment type="catalytic activity">
    <reaction evidence="1">
        <text>a ubiquinone + n Na(+)(in) + NADH + H(+) = a ubiquinol + n Na(+)(out) + NAD(+)</text>
        <dbReference type="Rhea" id="RHEA:47748"/>
        <dbReference type="Rhea" id="RHEA-COMP:9565"/>
        <dbReference type="Rhea" id="RHEA-COMP:9566"/>
        <dbReference type="ChEBI" id="CHEBI:15378"/>
        <dbReference type="ChEBI" id="CHEBI:16389"/>
        <dbReference type="ChEBI" id="CHEBI:17976"/>
        <dbReference type="ChEBI" id="CHEBI:29101"/>
        <dbReference type="ChEBI" id="CHEBI:57540"/>
        <dbReference type="ChEBI" id="CHEBI:57945"/>
        <dbReference type="EC" id="7.2.1.1"/>
    </reaction>
</comment>
<comment type="subunit">
    <text evidence="1">Composed of six subunits; NqrA, NqrB, NqrC, NqrD, NqrE and NqrF.</text>
</comment>
<comment type="similarity">
    <text evidence="1">Belongs to the NqrA family.</text>
</comment>